<name>QUEA_THEVB</name>
<keyword id="KW-0963">Cytoplasm</keyword>
<keyword id="KW-0671">Queuosine biosynthesis</keyword>
<keyword id="KW-1185">Reference proteome</keyword>
<keyword id="KW-0949">S-adenosyl-L-methionine</keyword>
<keyword id="KW-0808">Transferase</keyword>
<comment type="function">
    <text evidence="1">Transfers and isomerizes the ribose moiety from AdoMet to the 7-aminomethyl group of 7-deazaguanine (preQ1-tRNA) to give epoxyqueuosine (oQ-tRNA).</text>
</comment>
<comment type="catalytic activity">
    <reaction evidence="1">
        <text>7-aminomethyl-7-carbaguanosine(34) in tRNA + S-adenosyl-L-methionine = epoxyqueuosine(34) in tRNA + adenine + L-methionine + 2 H(+)</text>
        <dbReference type="Rhea" id="RHEA:32155"/>
        <dbReference type="Rhea" id="RHEA-COMP:10342"/>
        <dbReference type="Rhea" id="RHEA-COMP:18582"/>
        <dbReference type="ChEBI" id="CHEBI:15378"/>
        <dbReference type="ChEBI" id="CHEBI:16708"/>
        <dbReference type="ChEBI" id="CHEBI:57844"/>
        <dbReference type="ChEBI" id="CHEBI:59789"/>
        <dbReference type="ChEBI" id="CHEBI:82833"/>
        <dbReference type="ChEBI" id="CHEBI:194443"/>
        <dbReference type="EC" id="2.4.99.17"/>
    </reaction>
</comment>
<comment type="pathway">
    <text evidence="1">tRNA modification; tRNA-queuosine biosynthesis.</text>
</comment>
<comment type="subunit">
    <text evidence="1">Monomer.</text>
</comment>
<comment type="subcellular location">
    <subcellularLocation>
        <location evidence="1">Cytoplasm</location>
    </subcellularLocation>
</comment>
<comment type="similarity">
    <text evidence="1">Belongs to the QueA family.</text>
</comment>
<proteinExistence type="inferred from homology"/>
<gene>
    <name evidence="1" type="primary">queA</name>
    <name type="ordered locus">tll0922</name>
</gene>
<feature type="chain" id="PRO_0000165455" description="S-adenosylmethionine:tRNA ribosyltransferase-isomerase">
    <location>
        <begin position="1"/>
        <end position="354"/>
    </location>
</feature>
<protein>
    <recommendedName>
        <fullName evidence="1">S-adenosylmethionine:tRNA ribosyltransferase-isomerase</fullName>
        <ecNumber evidence="1">2.4.99.17</ecNumber>
    </recommendedName>
    <alternativeName>
        <fullName evidence="1">Queuosine biosynthesis protein QueA</fullName>
    </alternativeName>
</protein>
<organism>
    <name type="scientific">Thermosynechococcus vestitus (strain NIES-2133 / IAM M-273 / BP-1)</name>
    <dbReference type="NCBI Taxonomy" id="197221"/>
    <lineage>
        <taxon>Bacteria</taxon>
        <taxon>Bacillati</taxon>
        <taxon>Cyanobacteriota</taxon>
        <taxon>Cyanophyceae</taxon>
        <taxon>Acaryochloridales</taxon>
        <taxon>Thermosynechococcaceae</taxon>
        <taxon>Thermosynechococcus</taxon>
    </lineage>
</organism>
<dbReference type="EC" id="2.4.99.17" evidence="1"/>
<dbReference type="EMBL" id="BA000039">
    <property type="protein sequence ID" value="BAC08474.1"/>
    <property type="molecule type" value="Genomic_DNA"/>
</dbReference>
<dbReference type="RefSeq" id="NP_681712.1">
    <property type="nucleotide sequence ID" value="NC_004113.1"/>
</dbReference>
<dbReference type="RefSeq" id="WP_011056766.1">
    <property type="nucleotide sequence ID" value="NC_004113.1"/>
</dbReference>
<dbReference type="SMR" id="Q8DKD7"/>
<dbReference type="STRING" id="197221.gene:10747514"/>
<dbReference type="EnsemblBacteria" id="BAC08474">
    <property type="protein sequence ID" value="BAC08474"/>
    <property type="gene ID" value="BAC08474"/>
</dbReference>
<dbReference type="KEGG" id="tel:tll0922"/>
<dbReference type="PATRIC" id="fig|197221.4.peg.968"/>
<dbReference type="eggNOG" id="COG0809">
    <property type="taxonomic scope" value="Bacteria"/>
</dbReference>
<dbReference type="UniPathway" id="UPA00392"/>
<dbReference type="Proteomes" id="UP000000440">
    <property type="component" value="Chromosome"/>
</dbReference>
<dbReference type="GO" id="GO:0005737">
    <property type="term" value="C:cytoplasm"/>
    <property type="evidence" value="ECO:0007669"/>
    <property type="project" value="UniProtKB-SubCell"/>
</dbReference>
<dbReference type="GO" id="GO:0051075">
    <property type="term" value="F:S-adenosylmethionine:tRNA ribosyltransferase-isomerase activity"/>
    <property type="evidence" value="ECO:0007669"/>
    <property type="project" value="UniProtKB-EC"/>
</dbReference>
<dbReference type="GO" id="GO:0008616">
    <property type="term" value="P:queuosine biosynthetic process"/>
    <property type="evidence" value="ECO:0007669"/>
    <property type="project" value="UniProtKB-UniRule"/>
</dbReference>
<dbReference type="GO" id="GO:0002099">
    <property type="term" value="P:tRNA wobble guanine modification"/>
    <property type="evidence" value="ECO:0007669"/>
    <property type="project" value="TreeGrafter"/>
</dbReference>
<dbReference type="FunFam" id="2.40.10.240:FF:000002">
    <property type="entry name" value="S-adenosylmethionine:tRNA ribosyltransferase-isomerase"/>
    <property type="match status" value="1"/>
</dbReference>
<dbReference type="FunFam" id="3.40.1780.10:FF:000001">
    <property type="entry name" value="S-adenosylmethionine:tRNA ribosyltransferase-isomerase"/>
    <property type="match status" value="1"/>
</dbReference>
<dbReference type="Gene3D" id="2.40.10.240">
    <property type="entry name" value="QueA-like"/>
    <property type="match status" value="1"/>
</dbReference>
<dbReference type="Gene3D" id="3.40.1780.10">
    <property type="entry name" value="QueA-like"/>
    <property type="match status" value="1"/>
</dbReference>
<dbReference type="HAMAP" id="MF_00113">
    <property type="entry name" value="QueA"/>
    <property type="match status" value="1"/>
</dbReference>
<dbReference type="InterPro" id="IPR003699">
    <property type="entry name" value="QueA"/>
</dbReference>
<dbReference type="InterPro" id="IPR042118">
    <property type="entry name" value="QueA_dom1"/>
</dbReference>
<dbReference type="InterPro" id="IPR042119">
    <property type="entry name" value="QueA_dom2"/>
</dbReference>
<dbReference type="InterPro" id="IPR036100">
    <property type="entry name" value="QueA_sf"/>
</dbReference>
<dbReference type="NCBIfam" id="NF001140">
    <property type="entry name" value="PRK00147.1"/>
    <property type="match status" value="1"/>
</dbReference>
<dbReference type="NCBIfam" id="TIGR00113">
    <property type="entry name" value="queA"/>
    <property type="match status" value="1"/>
</dbReference>
<dbReference type="PANTHER" id="PTHR30307">
    <property type="entry name" value="S-ADENOSYLMETHIONINE:TRNA RIBOSYLTRANSFERASE-ISOMERASE"/>
    <property type="match status" value="1"/>
</dbReference>
<dbReference type="PANTHER" id="PTHR30307:SF0">
    <property type="entry name" value="S-ADENOSYLMETHIONINE:TRNA RIBOSYLTRANSFERASE-ISOMERASE"/>
    <property type="match status" value="1"/>
</dbReference>
<dbReference type="Pfam" id="PF02547">
    <property type="entry name" value="Queuosine_synth"/>
    <property type="match status" value="1"/>
</dbReference>
<dbReference type="SUPFAM" id="SSF111337">
    <property type="entry name" value="QueA-like"/>
    <property type="match status" value="1"/>
</dbReference>
<sequence length="354" mass="39670">MPHPDDFSLDAYDYQLPPERIAQQPVSPRDRSRLMVVTRDTAADHYFYELPQLLAPGDLLVLNDTRVIPARLIGQKVGAAGRTVEVFLLEELSDRQWLALVKPGRKLRPGAVIQIGPLQATVQTIDEETRGRVIEFDLPPGDRLWSYLDHLGEVPLPPYIDHPLADTEQYQTVYARRPGAVAAPTAGLHFTPELFSKLADRGIDHCFLTLHVGIGTFRPVEAKDIRHHHLHEEWLEVSAATVERIQAAKAAGGRIIAVGTTVIRALETAAHSGTLQPFCGKSDLYIYPGYQPKIVEGFITNFHLPRSSLMMLVSAFIGRERLLQLYQQAIDRQYRFYSFGDAMLILPSACHNTL</sequence>
<accession>Q8DKD7</accession>
<evidence type="ECO:0000255" key="1">
    <source>
        <dbReference type="HAMAP-Rule" id="MF_00113"/>
    </source>
</evidence>
<reference key="1">
    <citation type="journal article" date="2002" name="DNA Res.">
        <title>Complete genome structure of the thermophilic cyanobacterium Thermosynechococcus elongatus BP-1.</title>
        <authorList>
            <person name="Nakamura Y."/>
            <person name="Kaneko T."/>
            <person name="Sato S."/>
            <person name="Ikeuchi M."/>
            <person name="Katoh H."/>
            <person name="Sasamoto S."/>
            <person name="Watanabe A."/>
            <person name="Iriguchi M."/>
            <person name="Kawashima K."/>
            <person name="Kimura T."/>
            <person name="Kishida Y."/>
            <person name="Kiyokawa C."/>
            <person name="Kohara M."/>
            <person name="Matsumoto M."/>
            <person name="Matsuno A."/>
            <person name="Nakazaki N."/>
            <person name="Shimpo S."/>
            <person name="Sugimoto M."/>
            <person name="Takeuchi C."/>
            <person name="Yamada M."/>
            <person name="Tabata S."/>
        </authorList>
    </citation>
    <scope>NUCLEOTIDE SEQUENCE [LARGE SCALE GENOMIC DNA]</scope>
    <source>
        <strain>NIES-2133 / IAM M-273 / BP-1</strain>
    </source>
</reference>